<dbReference type="EMBL" id="AL596171">
    <property type="protein sequence ID" value="CAC97417.1"/>
    <property type="molecule type" value="Genomic_DNA"/>
</dbReference>
<dbReference type="PIR" id="AI1705">
    <property type="entry name" value="AI1705"/>
</dbReference>
<dbReference type="RefSeq" id="WP_010991057.1">
    <property type="nucleotide sequence ID" value="NC_003212.1"/>
</dbReference>
<dbReference type="SMR" id="Q929T6"/>
<dbReference type="STRING" id="272626.gene:17566545"/>
<dbReference type="KEGG" id="lin:lin2188"/>
<dbReference type="eggNOG" id="COG0239">
    <property type="taxonomic scope" value="Bacteria"/>
</dbReference>
<dbReference type="HOGENOM" id="CLU_114342_1_2_9"/>
<dbReference type="OrthoDB" id="9799631at2"/>
<dbReference type="Proteomes" id="UP000002513">
    <property type="component" value="Chromosome"/>
</dbReference>
<dbReference type="GO" id="GO:0005886">
    <property type="term" value="C:plasma membrane"/>
    <property type="evidence" value="ECO:0007669"/>
    <property type="project" value="UniProtKB-SubCell"/>
</dbReference>
<dbReference type="GO" id="GO:0062054">
    <property type="term" value="F:fluoride channel activity"/>
    <property type="evidence" value="ECO:0007669"/>
    <property type="project" value="UniProtKB-UniRule"/>
</dbReference>
<dbReference type="GO" id="GO:0046872">
    <property type="term" value="F:metal ion binding"/>
    <property type="evidence" value="ECO:0007669"/>
    <property type="project" value="UniProtKB-KW"/>
</dbReference>
<dbReference type="GO" id="GO:0140114">
    <property type="term" value="P:cellular detoxification of fluoride"/>
    <property type="evidence" value="ECO:0007669"/>
    <property type="project" value="UniProtKB-UniRule"/>
</dbReference>
<dbReference type="HAMAP" id="MF_00454">
    <property type="entry name" value="FluC"/>
    <property type="match status" value="1"/>
</dbReference>
<dbReference type="InterPro" id="IPR003691">
    <property type="entry name" value="FluC"/>
</dbReference>
<dbReference type="NCBIfam" id="TIGR00494">
    <property type="entry name" value="crcB"/>
    <property type="match status" value="1"/>
</dbReference>
<dbReference type="NCBIfam" id="NF010827">
    <property type="entry name" value="PRK14231.1"/>
    <property type="match status" value="1"/>
</dbReference>
<dbReference type="PANTHER" id="PTHR28259">
    <property type="entry name" value="FLUORIDE EXPORT PROTEIN 1-RELATED"/>
    <property type="match status" value="1"/>
</dbReference>
<dbReference type="PANTHER" id="PTHR28259:SF1">
    <property type="entry name" value="FLUORIDE EXPORT PROTEIN 1-RELATED"/>
    <property type="match status" value="1"/>
</dbReference>
<dbReference type="Pfam" id="PF02537">
    <property type="entry name" value="CRCB"/>
    <property type="match status" value="1"/>
</dbReference>
<accession>Q929T6</accession>
<organism>
    <name type="scientific">Listeria innocua serovar 6a (strain ATCC BAA-680 / CLIP 11262)</name>
    <dbReference type="NCBI Taxonomy" id="272626"/>
    <lineage>
        <taxon>Bacteria</taxon>
        <taxon>Bacillati</taxon>
        <taxon>Bacillota</taxon>
        <taxon>Bacilli</taxon>
        <taxon>Bacillales</taxon>
        <taxon>Listeriaceae</taxon>
        <taxon>Listeria</taxon>
    </lineage>
</organism>
<keyword id="KW-1003">Cell membrane</keyword>
<keyword id="KW-0407">Ion channel</keyword>
<keyword id="KW-0406">Ion transport</keyword>
<keyword id="KW-0472">Membrane</keyword>
<keyword id="KW-0479">Metal-binding</keyword>
<keyword id="KW-0915">Sodium</keyword>
<keyword id="KW-0812">Transmembrane</keyword>
<keyword id="KW-1133">Transmembrane helix</keyword>
<keyword id="KW-0813">Transport</keyword>
<name>FLUC2_LISIN</name>
<sequence>MYFLYVGIFGALGGMCRYAMNLWLGGGDFPSATLAVNLIGCFLLAFIMPFLAEKSRISLVLLNGIGTGFIGAFTTFSAFSVDTIELLQQGEVVLAISYILVSLIGGLVMVKFGRRFSNKLLRRGAHHVD</sequence>
<feature type="chain" id="PRO_0000110126" description="Fluoride-specific ion channel FluC 2">
    <location>
        <begin position="1"/>
        <end position="129"/>
    </location>
</feature>
<feature type="transmembrane region" description="Helical" evidence="1">
    <location>
        <begin position="3"/>
        <end position="23"/>
    </location>
</feature>
<feature type="transmembrane region" description="Helical" evidence="1">
    <location>
        <begin position="32"/>
        <end position="52"/>
    </location>
</feature>
<feature type="transmembrane region" description="Helical" evidence="1">
    <location>
        <begin position="59"/>
        <end position="79"/>
    </location>
</feature>
<feature type="transmembrane region" description="Helical" evidence="1">
    <location>
        <begin position="90"/>
        <end position="110"/>
    </location>
</feature>
<feature type="binding site" evidence="1">
    <location>
        <position position="71"/>
    </location>
    <ligand>
        <name>Na(+)</name>
        <dbReference type="ChEBI" id="CHEBI:29101"/>
        <note>structural</note>
    </ligand>
</feature>
<feature type="binding site" evidence="1">
    <location>
        <position position="74"/>
    </location>
    <ligand>
        <name>Na(+)</name>
        <dbReference type="ChEBI" id="CHEBI:29101"/>
        <note>structural</note>
    </ligand>
</feature>
<comment type="function">
    <text evidence="1">Fluoride-specific ion channel. Important for reducing fluoride concentration in the cell, thus reducing its toxicity.</text>
</comment>
<comment type="catalytic activity">
    <reaction evidence="1">
        <text>fluoride(in) = fluoride(out)</text>
        <dbReference type="Rhea" id="RHEA:76159"/>
        <dbReference type="ChEBI" id="CHEBI:17051"/>
    </reaction>
    <physiologicalReaction direction="left-to-right" evidence="1">
        <dbReference type="Rhea" id="RHEA:76160"/>
    </physiologicalReaction>
</comment>
<comment type="activity regulation">
    <text evidence="1">Na(+) is not transported, but it plays an essential structural role and its presence is essential for fluoride channel function.</text>
</comment>
<comment type="subcellular location">
    <subcellularLocation>
        <location evidence="1">Cell membrane</location>
        <topology evidence="1">Multi-pass membrane protein</topology>
    </subcellularLocation>
</comment>
<comment type="similarity">
    <text evidence="1">Belongs to the fluoride channel Fluc/FEX (TC 1.A.43) family.</text>
</comment>
<reference key="1">
    <citation type="journal article" date="2001" name="Science">
        <title>Comparative genomics of Listeria species.</title>
        <authorList>
            <person name="Glaser P."/>
            <person name="Frangeul L."/>
            <person name="Buchrieser C."/>
            <person name="Rusniok C."/>
            <person name="Amend A."/>
            <person name="Baquero F."/>
            <person name="Berche P."/>
            <person name="Bloecker H."/>
            <person name="Brandt P."/>
            <person name="Chakraborty T."/>
            <person name="Charbit A."/>
            <person name="Chetouani F."/>
            <person name="Couve E."/>
            <person name="de Daruvar A."/>
            <person name="Dehoux P."/>
            <person name="Domann E."/>
            <person name="Dominguez-Bernal G."/>
            <person name="Duchaud E."/>
            <person name="Durant L."/>
            <person name="Dussurget O."/>
            <person name="Entian K.-D."/>
            <person name="Fsihi H."/>
            <person name="Garcia-del Portillo F."/>
            <person name="Garrido P."/>
            <person name="Gautier L."/>
            <person name="Goebel W."/>
            <person name="Gomez-Lopez N."/>
            <person name="Hain T."/>
            <person name="Hauf J."/>
            <person name="Jackson D."/>
            <person name="Jones L.-M."/>
            <person name="Kaerst U."/>
            <person name="Kreft J."/>
            <person name="Kuhn M."/>
            <person name="Kunst F."/>
            <person name="Kurapkat G."/>
            <person name="Madueno E."/>
            <person name="Maitournam A."/>
            <person name="Mata Vicente J."/>
            <person name="Ng E."/>
            <person name="Nedjari H."/>
            <person name="Nordsiek G."/>
            <person name="Novella S."/>
            <person name="de Pablos B."/>
            <person name="Perez-Diaz J.-C."/>
            <person name="Purcell R."/>
            <person name="Remmel B."/>
            <person name="Rose M."/>
            <person name="Schlueter T."/>
            <person name="Simoes N."/>
            <person name="Tierrez A."/>
            <person name="Vazquez-Boland J.-A."/>
            <person name="Voss H."/>
            <person name="Wehland J."/>
            <person name="Cossart P."/>
        </authorList>
    </citation>
    <scope>NUCLEOTIDE SEQUENCE [LARGE SCALE GENOMIC DNA]</scope>
    <source>
        <strain>ATCC BAA-680 / CLIP 11262</strain>
    </source>
</reference>
<evidence type="ECO:0000255" key="1">
    <source>
        <dbReference type="HAMAP-Rule" id="MF_00454"/>
    </source>
</evidence>
<protein>
    <recommendedName>
        <fullName evidence="1">Fluoride-specific ion channel FluC 2</fullName>
    </recommendedName>
</protein>
<proteinExistence type="inferred from homology"/>
<gene>
    <name evidence="1" type="primary">fluC2</name>
    <name evidence="1" type="synonym">crcB2</name>
    <name type="ordered locus">lin2188</name>
</gene>